<keyword id="KW-0002">3D-structure</keyword>
<keyword id="KW-1185">Reference proteome</keyword>
<keyword id="KW-0687">Ribonucleoprotein</keyword>
<keyword id="KW-0689">Ribosomal protein</keyword>
<dbReference type="EMBL" id="AL591979">
    <property type="protein sequence ID" value="CAC99618.1"/>
    <property type="molecule type" value="Genomic_DNA"/>
</dbReference>
<dbReference type="PIR" id="AD1267">
    <property type="entry name" value="AD1267"/>
</dbReference>
<dbReference type="RefSeq" id="NP_465065.1">
    <property type="nucleotide sequence ID" value="NC_003210.1"/>
</dbReference>
<dbReference type="RefSeq" id="WP_003726866.1">
    <property type="nucleotide sequence ID" value="NZ_CP149495.1"/>
</dbReference>
<dbReference type="PDB" id="7NHN">
    <property type="method" value="EM"/>
    <property type="resolution" value="2.90 A"/>
    <property type="chains" value="Z=1-96"/>
</dbReference>
<dbReference type="PDB" id="8A57">
    <property type="method" value="EM"/>
    <property type="resolution" value="2.30 A"/>
    <property type="chains" value="Z=1-96"/>
</dbReference>
<dbReference type="PDB" id="8A5I">
    <property type="method" value="EM"/>
    <property type="resolution" value="2.30 A"/>
    <property type="chains" value="Z=1-96"/>
</dbReference>
<dbReference type="PDB" id="8A63">
    <property type="method" value="EM"/>
    <property type="resolution" value="3.10 A"/>
    <property type="chains" value="Z=1-96"/>
</dbReference>
<dbReference type="PDBsum" id="7NHN"/>
<dbReference type="PDBsum" id="8A57"/>
<dbReference type="PDBsum" id="8A5I"/>
<dbReference type="PDBsum" id="8A63"/>
<dbReference type="EMDB" id="EMD-12334"/>
<dbReference type="EMDB" id="EMD-15161"/>
<dbReference type="EMDB" id="EMD-15175"/>
<dbReference type="EMDB" id="EMD-15204"/>
<dbReference type="SMR" id="P66125"/>
<dbReference type="STRING" id="169963.gene:17594197"/>
<dbReference type="PaxDb" id="169963-lmo1540"/>
<dbReference type="EnsemblBacteria" id="CAC99618">
    <property type="protein sequence ID" value="CAC99618"/>
    <property type="gene ID" value="CAC99618"/>
</dbReference>
<dbReference type="GeneID" id="93239419"/>
<dbReference type="GeneID" id="987815"/>
<dbReference type="KEGG" id="lmo:lmo1540"/>
<dbReference type="PATRIC" id="fig|169963.11.peg.1581"/>
<dbReference type="eggNOG" id="COG0211">
    <property type="taxonomic scope" value="Bacteria"/>
</dbReference>
<dbReference type="HOGENOM" id="CLU_095424_4_0_9"/>
<dbReference type="OrthoDB" id="9803474at2"/>
<dbReference type="PhylomeDB" id="P66125"/>
<dbReference type="BioCyc" id="LMON169963:LMO1540-MONOMER"/>
<dbReference type="Proteomes" id="UP000000817">
    <property type="component" value="Chromosome"/>
</dbReference>
<dbReference type="GO" id="GO:0022625">
    <property type="term" value="C:cytosolic large ribosomal subunit"/>
    <property type="evidence" value="ECO:0000318"/>
    <property type="project" value="GO_Central"/>
</dbReference>
<dbReference type="GO" id="GO:0003735">
    <property type="term" value="F:structural constituent of ribosome"/>
    <property type="evidence" value="ECO:0000318"/>
    <property type="project" value="GO_Central"/>
</dbReference>
<dbReference type="GO" id="GO:0006412">
    <property type="term" value="P:translation"/>
    <property type="evidence" value="ECO:0007669"/>
    <property type="project" value="UniProtKB-UniRule"/>
</dbReference>
<dbReference type="FunFam" id="2.40.50.100:FF:000004">
    <property type="entry name" value="50S ribosomal protein L27"/>
    <property type="match status" value="1"/>
</dbReference>
<dbReference type="Gene3D" id="2.40.50.100">
    <property type="match status" value="1"/>
</dbReference>
<dbReference type="HAMAP" id="MF_00539">
    <property type="entry name" value="Ribosomal_bL27"/>
    <property type="match status" value="1"/>
</dbReference>
<dbReference type="InterPro" id="IPR001684">
    <property type="entry name" value="Ribosomal_bL27"/>
</dbReference>
<dbReference type="InterPro" id="IPR018261">
    <property type="entry name" value="Ribosomal_bL27_CS"/>
</dbReference>
<dbReference type="NCBIfam" id="TIGR00062">
    <property type="entry name" value="L27"/>
    <property type="match status" value="1"/>
</dbReference>
<dbReference type="PANTHER" id="PTHR15893:SF0">
    <property type="entry name" value="LARGE RIBOSOMAL SUBUNIT PROTEIN BL27M"/>
    <property type="match status" value="1"/>
</dbReference>
<dbReference type="PANTHER" id="PTHR15893">
    <property type="entry name" value="RIBOSOMAL PROTEIN L27"/>
    <property type="match status" value="1"/>
</dbReference>
<dbReference type="Pfam" id="PF01016">
    <property type="entry name" value="Ribosomal_L27"/>
    <property type="match status" value="1"/>
</dbReference>
<dbReference type="PRINTS" id="PR00063">
    <property type="entry name" value="RIBOSOMALL27"/>
</dbReference>
<dbReference type="SUPFAM" id="SSF110324">
    <property type="entry name" value="Ribosomal L27 protein-like"/>
    <property type="match status" value="1"/>
</dbReference>
<dbReference type="PROSITE" id="PS00831">
    <property type="entry name" value="RIBOSOMAL_L27"/>
    <property type="match status" value="1"/>
</dbReference>
<reference key="1">
    <citation type="journal article" date="2001" name="Science">
        <title>Comparative genomics of Listeria species.</title>
        <authorList>
            <person name="Glaser P."/>
            <person name="Frangeul L."/>
            <person name="Buchrieser C."/>
            <person name="Rusniok C."/>
            <person name="Amend A."/>
            <person name="Baquero F."/>
            <person name="Berche P."/>
            <person name="Bloecker H."/>
            <person name="Brandt P."/>
            <person name="Chakraborty T."/>
            <person name="Charbit A."/>
            <person name="Chetouani F."/>
            <person name="Couve E."/>
            <person name="de Daruvar A."/>
            <person name="Dehoux P."/>
            <person name="Domann E."/>
            <person name="Dominguez-Bernal G."/>
            <person name="Duchaud E."/>
            <person name="Durant L."/>
            <person name="Dussurget O."/>
            <person name="Entian K.-D."/>
            <person name="Fsihi H."/>
            <person name="Garcia-del Portillo F."/>
            <person name="Garrido P."/>
            <person name="Gautier L."/>
            <person name="Goebel W."/>
            <person name="Gomez-Lopez N."/>
            <person name="Hain T."/>
            <person name="Hauf J."/>
            <person name="Jackson D."/>
            <person name="Jones L.-M."/>
            <person name="Kaerst U."/>
            <person name="Kreft J."/>
            <person name="Kuhn M."/>
            <person name="Kunst F."/>
            <person name="Kurapkat G."/>
            <person name="Madueno E."/>
            <person name="Maitournam A."/>
            <person name="Mata Vicente J."/>
            <person name="Ng E."/>
            <person name="Nedjari H."/>
            <person name="Nordsiek G."/>
            <person name="Novella S."/>
            <person name="de Pablos B."/>
            <person name="Perez-Diaz J.-C."/>
            <person name="Purcell R."/>
            <person name="Remmel B."/>
            <person name="Rose M."/>
            <person name="Schlueter T."/>
            <person name="Simoes N."/>
            <person name="Tierrez A."/>
            <person name="Vazquez-Boland J.-A."/>
            <person name="Voss H."/>
            <person name="Wehland J."/>
            <person name="Cossart P."/>
        </authorList>
    </citation>
    <scope>NUCLEOTIDE SEQUENCE [LARGE SCALE GENOMIC DNA]</scope>
    <source>
        <strain>ATCC BAA-679 / EGD-e</strain>
    </source>
</reference>
<proteinExistence type="evidence at protein level"/>
<organism>
    <name type="scientific">Listeria monocytogenes serovar 1/2a (strain ATCC BAA-679 / EGD-e)</name>
    <dbReference type="NCBI Taxonomy" id="169963"/>
    <lineage>
        <taxon>Bacteria</taxon>
        <taxon>Bacillati</taxon>
        <taxon>Bacillota</taxon>
        <taxon>Bacilli</taxon>
        <taxon>Bacillales</taxon>
        <taxon>Listeriaceae</taxon>
        <taxon>Listeria</taxon>
    </lineage>
</organism>
<comment type="PTM">
    <text evidence="1">The N-terminus is cleaved by ribosomal processing cysteine protease Prp.</text>
</comment>
<comment type="similarity">
    <text evidence="2">Belongs to the bacterial ribosomal protein bL27 family.</text>
</comment>
<gene>
    <name evidence="2" type="primary">rpmA</name>
    <name type="ordered locus">lmo1540</name>
</gene>
<name>RL27_LISMO</name>
<sequence length="96" mass="10551">MLKFDIQHFAHKKGGGSTSNGRDSESKRLGAKRADGQFVTGGSILYRQRGTKIYPGTNVGRGGDDTLFAKTDGVVRFERMGRDKKKVSVYPEVQEA</sequence>
<protein>
    <recommendedName>
        <fullName evidence="2">Large ribosomal subunit protein bL27</fullName>
    </recommendedName>
    <alternativeName>
        <fullName evidence="4">50S ribosomal protein L27</fullName>
    </alternativeName>
</protein>
<evidence type="ECO:0000250" key="1">
    <source>
        <dbReference type="UniProtKB" id="Q2FXT0"/>
    </source>
</evidence>
<evidence type="ECO:0000255" key="2">
    <source>
        <dbReference type="HAMAP-Rule" id="MF_00539"/>
    </source>
</evidence>
<evidence type="ECO:0000256" key="3">
    <source>
        <dbReference type="SAM" id="MobiDB-lite"/>
    </source>
</evidence>
<evidence type="ECO:0000305" key="4"/>
<evidence type="ECO:0007829" key="5">
    <source>
        <dbReference type="PDB" id="8A57"/>
    </source>
</evidence>
<evidence type="ECO:0007829" key="6">
    <source>
        <dbReference type="PDB" id="8A5I"/>
    </source>
</evidence>
<feature type="propeptide" id="PRO_0000459909" evidence="1">
    <location>
        <begin position="1"/>
        <end position="9"/>
    </location>
</feature>
<feature type="chain" id="PRO_0000181115" description="Large ribosomal subunit protein bL27">
    <location>
        <begin position="10"/>
        <end position="96"/>
    </location>
</feature>
<feature type="region of interest" description="Disordered" evidence="3">
    <location>
        <begin position="1"/>
        <end position="33"/>
    </location>
</feature>
<feature type="compositionally biased region" description="Basic and acidic residues" evidence="3">
    <location>
        <begin position="22"/>
        <end position="33"/>
    </location>
</feature>
<feature type="strand" evidence="5">
    <location>
        <begin position="30"/>
        <end position="33"/>
    </location>
</feature>
<feature type="strand" evidence="5">
    <location>
        <begin position="44"/>
        <end position="47"/>
    </location>
</feature>
<feature type="strand" evidence="5">
    <location>
        <begin position="52"/>
        <end position="55"/>
    </location>
</feature>
<feature type="strand" evidence="5">
    <location>
        <begin position="59"/>
        <end position="61"/>
    </location>
</feature>
<feature type="strand" evidence="5">
    <location>
        <begin position="67"/>
        <end position="79"/>
    </location>
</feature>
<feature type="strand" evidence="6">
    <location>
        <begin position="81"/>
        <end position="83"/>
    </location>
</feature>
<feature type="strand" evidence="5">
    <location>
        <begin position="85"/>
        <end position="90"/>
    </location>
</feature>
<accession>P66125</accession>
<accession>Q92BH4</accession>